<comment type="function">
    <text evidence="1">Located on the platform of the 30S subunit, it bridges several disparate RNA helices of the 16S rRNA. Forms part of the Shine-Dalgarno cleft in the 70S ribosome.</text>
</comment>
<comment type="subunit">
    <text evidence="1">Part of the 30S ribosomal subunit. Interacts with proteins S7 and S18. Binds to IF-3.</text>
</comment>
<comment type="similarity">
    <text evidence="1">Belongs to the universal ribosomal protein uS11 family.</text>
</comment>
<organism>
    <name type="scientific">Xylella fastidiosa (strain 9a5c)</name>
    <dbReference type="NCBI Taxonomy" id="160492"/>
    <lineage>
        <taxon>Bacteria</taxon>
        <taxon>Pseudomonadati</taxon>
        <taxon>Pseudomonadota</taxon>
        <taxon>Gammaproteobacteria</taxon>
        <taxon>Lysobacterales</taxon>
        <taxon>Lysobacteraceae</taxon>
        <taxon>Xylella</taxon>
    </lineage>
</organism>
<proteinExistence type="inferred from homology"/>
<feature type="chain" id="PRO_0000123261" description="Small ribosomal subunit protein uS11">
    <location>
        <begin position="1"/>
        <end position="130"/>
    </location>
</feature>
<gene>
    <name evidence="1" type="primary">rpsK</name>
    <name type="ordered locus">XF_1174</name>
</gene>
<reference key="1">
    <citation type="journal article" date="2000" name="Nature">
        <title>The genome sequence of the plant pathogen Xylella fastidiosa.</title>
        <authorList>
            <person name="Simpson A.J.G."/>
            <person name="Reinach F.C."/>
            <person name="Arruda P."/>
            <person name="Abreu F.A."/>
            <person name="Acencio M."/>
            <person name="Alvarenga R."/>
            <person name="Alves L.M.C."/>
            <person name="Araya J.E."/>
            <person name="Baia G.S."/>
            <person name="Baptista C.S."/>
            <person name="Barros M.H."/>
            <person name="Bonaccorsi E.D."/>
            <person name="Bordin S."/>
            <person name="Bove J.M."/>
            <person name="Briones M.R.S."/>
            <person name="Bueno M.R.P."/>
            <person name="Camargo A.A."/>
            <person name="Camargo L.E.A."/>
            <person name="Carraro D.M."/>
            <person name="Carrer H."/>
            <person name="Colauto N.B."/>
            <person name="Colombo C."/>
            <person name="Costa F.F."/>
            <person name="Costa M.C.R."/>
            <person name="Costa-Neto C.M."/>
            <person name="Coutinho L.L."/>
            <person name="Cristofani M."/>
            <person name="Dias-Neto E."/>
            <person name="Docena C."/>
            <person name="El-Dorry H."/>
            <person name="Facincani A.P."/>
            <person name="Ferreira A.J.S."/>
            <person name="Ferreira V.C.A."/>
            <person name="Ferro J.A."/>
            <person name="Fraga J.S."/>
            <person name="Franca S.C."/>
            <person name="Franco M.C."/>
            <person name="Frohme M."/>
            <person name="Furlan L.R."/>
            <person name="Garnier M."/>
            <person name="Goldman G.H."/>
            <person name="Goldman M.H.S."/>
            <person name="Gomes S.L."/>
            <person name="Gruber A."/>
            <person name="Ho P.L."/>
            <person name="Hoheisel J.D."/>
            <person name="Junqueira M.L."/>
            <person name="Kemper E.L."/>
            <person name="Kitajima J.P."/>
            <person name="Krieger J.E."/>
            <person name="Kuramae E.E."/>
            <person name="Laigret F."/>
            <person name="Lambais M.R."/>
            <person name="Leite L.C.C."/>
            <person name="Lemos E.G.M."/>
            <person name="Lemos M.V.F."/>
            <person name="Lopes S.A."/>
            <person name="Lopes C.R."/>
            <person name="Machado J.A."/>
            <person name="Machado M.A."/>
            <person name="Madeira A.M.B.N."/>
            <person name="Madeira H.M.F."/>
            <person name="Marino C.L."/>
            <person name="Marques M.V."/>
            <person name="Martins E.A.L."/>
            <person name="Martins E.M.F."/>
            <person name="Matsukuma A.Y."/>
            <person name="Menck C.F.M."/>
            <person name="Miracca E.C."/>
            <person name="Miyaki C.Y."/>
            <person name="Monteiro-Vitorello C.B."/>
            <person name="Moon D.H."/>
            <person name="Nagai M.A."/>
            <person name="Nascimento A.L.T.O."/>
            <person name="Netto L.E.S."/>
            <person name="Nhani A. Jr."/>
            <person name="Nobrega F.G."/>
            <person name="Nunes L.R."/>
            <person name="Oliveira M.A."/>
            <person name="de Oliveira M.C."/>
            <person name="de Oliveira R.C."/>
            <person name="Palmieri D.A."/>
            <person name="Paris A."/>
            <person name="Peixoto B.R."/>
            <person name="Pereira G.A.G."/>
            <person name="Pereira H.A. Jr."/>
            <person name="Pesquero J.B."/>
            <person name="Quaggio R.B."/>
            <person name="Roberto P.G."/>
            <person name="Rodrigues V."/>
            <person name="de Rosa A.J.M."/>
            <person name="de Rosa V.E. Jr."/>
            <person name="de Sa R.G."/>
            <person name="Santelli R.V."/>
            <person name="Sawasaki H.E."/>
            <person name="da Silva A.C.R."/>
            <person name="da Silva A.M."/>
            <person name="da Silva F.R."/>
            <person name="Silva W.A. Jr."/>
            <person name="da Silveira J.F."/>
            <person name="Silvestri M.L.Z."/>
            <person name="Siqueira W.J."/>
            <person name="de Souza A.A."/>
            <person name="de Souza A.P."/>
            <person name="Terenzi M.F."/>
            <person name="Truffi D."/>
            <person name="Tsai S.M."/>
            <person name="Tsuhako M.H."/>
            <person name="Vallada H."/>
            <person name="Van Sluys M.A."/>
            <person name="Verjovski-Almeida S."/>
            <person name="Vettore A.L."/>
            <person name="Zago M.A."/>
            <person name="Zatz M."/>
            <person name="Meidanis J."/>
            <person name="Setubal J.C."/>
        </authorList>
    </citation>
    <scope>NUCLEOTIDE SEQUENCE [LARGE SCALE GENOMIC DNA]</scope>
    <source>
        <strain>9a5c</strain>
    </source>
</reference>
<evidence type="ECO:0000255" key="1">
    <source>
        <dbReference type="HAMAP-Rule" id="MF_01310"/>
    </source>
</evidence>
<evidence type="ECO:0000305" key="2"/>
<dbReference type="EMBL" id="AE003849">
    <property type="protein sequence ID" value="AAF83984.1"/>
    <property type="molecule type" value="Genomic_DNA"/>
</dbReference>
<dbReference type="PIR" id="G82714">
    <property type="entry name" value="G82714"/>
</dbReference>
<dbReference type="RefSeq" id="WP_010893687.1">
    <property type="nucleotide sequence ID" value="NC_002488.3"/>
</dbReference>
<dbReference type="SMR" id="Q9PE54"/>
<dbReference type="STRING" id="160492.XF_1174"/>
<dbReference type="KEGG" id="xfa:XF_1174"/>
<dbReference type="eggNOG" id="COG0100">
    <property type="taxonomic scope" value="Bacteria"/>
</dbReference>
<dbReference type="HOGENOM" id="CLU_072439_5_0_6"/>
<dbReference type="Proteomes" id="UP000000812">
    <property type="component" value="Chromosome"/>
</dbReference>
<dbReference type="GO" id="GO:1990904">
    <property type="term" value="C:ribonucleoprotein complex"/>
    <property type="evidence" value="ECO:0007669"/>
    <property type="project" value="UniProtKB-KW"/>
</dbReference>
<dbReference type="GO" id="GO:0005840">
    <property type="term" value="C:ribosome"/>
    <property type="evidence" value="ECO:0007669"/>
    <property type="project" value="UniProtKB-KW"/>
</dbReference>
<dbReference type="GO" id="GO:0019843">
    <property type="term" value="F:rRNA binding"/>
    <property type="evidence" value="ECO:0007669"/>
    <property type="project" value="UniProtKB-UniRule"/>
</dbReference>
<dbReference type="GO" id="GO:0003735">
    <property type="term" value="F:structural constituent of ribosome"/>
    <property type="evidence" value="ECO:0007669"/>
    <property type="project" value="InterPro"/>
</dbReference>
<dbReference type="GO" id="GO:0006412">
    <property type="term" value="P:translation"/>
    <property type="evidence" value="ECO:0007669"/>
    <property type="project" value="UniProtKB-UniRule"/>
</dbReference>
<dbReference type="FunFam" id="3.30.420.80:FF:000001">
    <property type="entry name" value="30S ribosomal protein S11"/>
    <property type="match status" value="1"/>
</dbReference>
<dbReference type="Gene3D" id="3.30.420.80">
    <property type="entry name" value="Ribosomal protein S11"/>
    <property type="match status" value="1"/>
</dbReference>
<dbReference type="HAMAP" id="MF_01310">
    <property type="entry name" value="Ribosomal_uS11"/>
    <property type="match status" value="1"/>
</dbReference>
<dbReference type="InterPro" id="IPR001971">
    <property type="entry name" value="Ribosomal_uS11"/>
</dbReference>
<dbReference type="InterPro" id="IPR019981">
    <property type="entry name" value="Ribosomal_uS11_bac-type"/>
</dbReference>
<dbReference type="InterPro" id="IPR018102">
    <property type="entry name" value="Ribosomal_uS11_CS"/>
</dbReference>
<dbReference type="InterPro" id="IPR036967">
    <property type="entry name" value="Ribosomal_uS11_sf"/>
</dbReference>
<dbReference type="NCBIfam" id="NF003698">
    <property type="entry name" value="PRK05309.1"/>
    <property type="match status" value="1"/>
</dbReference>
<dbReference type="NCBIfam" id="TIGR03632">
    <property type="entry name" value="uS11_bact"/>
    <property type="match status" value="1"/>
</dbReference>
<dbReference type="PANTHER" id="PTHR11759">
    <property type="entry name" value="40S RIBOSOMAL PROTEIN S14/30S RIBOSOMAL PROTEIN S11"/>
    <property type="match status" value="1"/>
</dbReference>
<dbReference type="Pfam" id="PF00411">
    <property type="entry name" value="Ribosomal_S11"/>
    <property type="match status" value="1"/>
</dbReference>
<dbReference type="PIRSF" id="PIRSF002131">
    <property type="entry name" value="Ribosomal_S11"/>
    <property type="match status" value="1"/>
</dbReference>
<dbReference type="SUPFAM" id="SSF53137">
    <property type="entry name" value="Translational machinery components"/>
    <property type="match status" value="1"/>
</dbReference>
<dbReference type="PROSITE" id="PS00054">
    <property type="entry name" value="RIBOSOMAL_S11"/>
    <property type="match status" value="1"/>
</dbReference>
<sequence length="130" mass="14065">MAKQSVVKIKKKVKRVITDGVAHISASFNNTIVTITDRQGNSLFWCTSGASGFRGSRKCTPFAAQVAAEKAGRAVLDYGMKSLEVRINGPGPGRESAVRSLNNVGYKITNIIDVTPIPHNGCRPPKKRRV</sequence>
<accession>Q9PE54</accession>
<name>RS11_XYLFA</name>
<keyword id="KW-0687">Ribonucleoprotein</keyword>
<keyword id="KW-0689">Ribosomal protein</keyword>
<keyword id="KW-0694">RNA-binding</keyword>
<keyword id="KW-0699">rRNA-binding</keyword>
<protein>
    <recommendedName>
        <fullName evidence="1">Small ribosomal subunit protein uS11</fullName>
    </recommendedName>
    <alternativeName>
        <fullName evidence="2">30S ribosomal protein S11</fullName>
    </alternativeName>
</protein>